<gene>
    <name evidence="1" type="primary">lipA</name>
    <name type="ordered locus">Csac_0871</name>
</gene>
<accession>A4XHV2</accession>
<organism>
    <name type="scientific">Caldicellulosiruptor saccharolyticus (strain ATCC 43494 / DSM 8903 / Tp8T 6331)</name>
    <dbReference type="NCBI Taxonomy" id="351627"/>
    <lineage>
        <taxon>Bacteria</taxon>
        <taxon>Bacillati</taxon>
        <taxon>Bacillota</taxon>
        <taxon>Bacillota incertae sedis</taxon>
        <taxon>Caldicellulosiruptorales</taxon>
        <taxon>Caldicellulosiruptoraceae</taxon>
        <taxon>Caldicellulosiruptor</taxon>
    </lineage>
</organism>
<name>LIPA_CALS8</name>
<feature type="chain" id="PRO_1000012205" description="Lipoyl synthase">
    <location>
        <begin position="1"/>
        <end position="285"/>
    </location>
</feature>
<feature type="domain" description="Radical SAM core" evidence="2">
    <location>
        <begin position="48"/>
        <end position="264"/>
    </location>
</feature>
<feature type="binding site" evidence="1">
    <location>
        <position position="36"/>
    </location>
    <ligand>
        <name>[4Fe-4S] cluster</name>
        <dbReference type="ChEBI" id="CHEBI:49883"/>
        <label>1</label>
    </ligand>
</feature>
<feature type="binding site" evidence="1">
    <location>
        <position position="41"/>
    </location>
    <ligand>
        <name>[4Fe-4S] cluster</name>
        <dbReference type="ChEBI" id="CHEBI:49883"/>
        <label>1</label>
    </ligand>
</feature>
<feature type="binding site" evidence="1">
    <location>
        <position position="47"/>
    </location>
    <ligand>
        <name>[4Fe-4S] cluster</name>
        <dbReference type="ChEBI" id="CHEBI:49883"/>
        <label>1</label>
    </ligand>
</feature>
<feature type="binding site" evidence="1">
    <location>
        <position position="62"/>
    </location>
    <ligand>
        <name>[4Fe-4S] cluster</name>
        <dbReference type="ChEBI" id="CHEBI:49883"/>
        <label>2</label>
        <note>4Fe-4S-S-AdoMet</note>
    </ligand>
</feature>
<feature type="binding site" evidence="1">
    <location>
        <position position="66"/>
    </location>
    <ligand>
        <name>[4Fe-4S] cluster</name>
        <dbReference type="ChEBI" id="CHEBI:49883"/>
        <label>2</label>
        <note>4Fe-4S-S-AdoMet</note>
    </ligand>
</feature>
<feature type="binding site" evidence="1">
    <location>
        <position position="69"/>
    </location>
    <ligand>
        <name>[4Fe-4S] cluster</name>
        <dbReference type="ChEBI" id="CHEBI:49883"/>
        <label>2</label>
        <note>4Fe-4S-S-AdoMet</note>
    </ligand>
</feature>
<feature type="binding site" evidence="1">
    <location>
        <position position="275"/>
    </location>
    <ligand>
        <name>[4Fe-4S] cluster</name>
        <dbReference type="ChEBI" id="CHEBI:49883"/>
        <label>1</label>
    </ligand>
</feature>
<comment type="function">
    <text evidence="1">Catalyzes the radical-mediated insertion of two sulfur atoms into the C-6 and C-8 positions of the octanoyl moiety bound to the lipoyl domains of lipoate-dependent enzymes, thereby converting the octanoylated domains into lipoylated derivatives.</text>
</comment>
<comment type="catalytic activity">
    <reaction evidence="1">
        <text>[[Fe-S] cluster scaffold protein carrying a second [4Fe-4S](2+) cluster] + N(6)-octanoyl-L-lysyl-[protein] + 2 oxidized [2Fe-2S]-[ferredoxin] + 2 S-adenosyl-L-methionine + 4 H(+) = [[Fe-S] cluster scaffold protein] + N(6)-[(R)-dihydrolipoyl]-L-lysyl-[protein] + 4 Fe(3+) + 2 hydrogen sulfide + 2 5'-deoxyadenosine + 2 L-methionine + 2 reduced [2Fe-2S]-[ferredoxin]</text>
        <dbReference type="Rhea" id="RHEA:16585"/>
        <dbReference type="Rhea" id="RHEA-COMP:9928"/>
        <dbReference type="Rhea" id="RHEA-COMP:10000"/>
        <dbReference type="Rhea" id="RHEA-COMP:10001"/>
        <dbReference type="Rhea" id="RHEA-COMP:10475"/>
        <dbReference type="Rhea" id="RHEA-COMP:14568"/>
        <dbReference type="Rhea" id="RHEA-COMP:14569"/>
        <dbReference type="ChEBI" id="CHEBI:15378"/>
        <dbReference type="ChEBI" id="CHEBI:17319"/>
        <dbReference type="ChEBI" id="CHEBI:29034"/>
        <dbReference type="ChEBI" id="CHEBI:29919"/>
        <dbReference type="ChEBI" id="CHEBI:33722"/>
        <dbReference type="ChEBI" id="CHEBI:33737"/>
        <dbReference type="ChEBI" id="CHEBI:33738"/>
        <dbReference type="ChEBI" id="CHEBI:57844"/>
        <dbReference type="ChEBI" id="CHEBI:59789"/>
        <dbReference type="ChEBI" id="CHEBI:78809"/>
        <dbReference type="ChEBI" id="CHEBI:83100"/>
        <dbReference type="EC" id="2.8.1.8"/>
    </reaction>
</comment>
<comment type="cofactor">
    <cofactor evidence="1">
        <name>[4Fe-4S] cluster</name>
        <dbReference type="ChEBI" id="CHEBI:49883"/>
    </cofactor>
    <text evidence="1">Binds 2 [4Fe-4S] clusters per subunit. One cluster is coordinated with 3 cysteines and an exchangeable S-adenosyl-L-methionine.</text>
</comment>
<comment type="pathway">
    <text evidence="1">Protein modification; protein lipoylation via endogenous pathway; protein N(6)-(lipoyl)lysine from octanoyl-[acyl-carrier-protein]: step 2/2.</text>
</comment>
<comment type="subcellular location">
    <subcellularLocation>
        <location evidence="1">Cytoplasm</location>
    </subcellularLocation>
</comment>
<comment type="similarity">
    <text evidence="1">Belongs to the radical SAM superfamily. Lipoyl synthase family.</text>
</comment>
<proteinExistence type="inferred from homology"/>
<sequence length="285" mass="32331">MMQTKKPDWLRIRIKANQSVEEVIKLLKDLSLHTVCQEAQCPNIFECFSKKTATFLILGDVCTRNCTFCDVKKGKPQEVDKNEPKKIAEAVKVLNLSYVVVTSVTRDDLEDGGAEHFANVIEKIKELNPQTKVEVLIPDFNGDEKAIYKVVSARPDVLSHNVETVPRLYPTVRSKADYERSLSVLKVAKKMDNRIYTKSGLMVGLGETKEEVKEVLKNLRSVGCDFVTIGQYLSPSKQHYPVIEYIHPNVFEEYKEYAISIGFKHVMSAPLVRSSYLAEETTKII</sequence>
<keyword id="KW-0004">4Fe-4S</keyword>
<keyword id="KW-0963">Cytoplasm</keyword>
<keyword id="KW-0408">Iron</keyword>
<keyword id="KW-0411">Iron-sulfur</keyword>
<keyword id="KW-0479">Metal-binding</keyword>
<keyword id="KW-0949">S-adenosyl-L-methionine</keyword>
<keyword id="KW-0808">Transferase</keyword>
<reference key="1">
    <citation type="submission" date="2007-04" db="EMBL/GenBank/DDBJ databases">
        <title>Genome sequence of the thermophilic hydrogen-producing bacterium Caldicellulosiruptor saccharolyticus DSM 8903.</title>
        <authorList>
            <person name="Copeland A."/>
            <person name="Lucas S."/>
            <person name="Lapidus A."/>
            <person name="Barry K."/>
            <person name="Detter J.C."/>
            <person name="Glavina del Rio T."/>
            <person name="Hammon N."/>
            <person name="Israni S."/>
            <person name="Dalin E."/>
            <person name="Tice H."/>
            <person name="Pitluck S."/>
            <person name="Kiss H."/>
            <person name="Brettin T."/>
            <person name="Bruce D."/>
            <person name="Han C."/>
            <person name="Schmutz J."/>
            <person name="Larimer F."/>
            <person name="Land M."/>
            <person name="Hauser L."/>
            <person name="Kyrpides N."/>
            <person name="Lykidis A."/>
            <person name="van de Werken H.J.G."/>
            <person name="Verhaart M.R.A."/>
            <person name="VanFossen A.L."/>
            <person name="Lewis D.L."/>
            <person name="Nichols J.D."/>
            <person name="Goorissen H.P."/>
            <person name="van Niel E.W.J."/>
            <person name="Stams F.J.M."/>
            <person name="Willquist K.U."/>
            <person name="Ward D.E."/>
            <person name="van der Oost J."/>
            <person name="Kelly R.M."/>
            <person name="Kengen S.M.W."/>
            <person name="Richardson P."/>
        </authorList>
    </citation>
    <scope>NUCLEOTIDE SEQUENCE [LARGE SCALE GENOMIC DNA]</scope>
    <source>
        <strain>ATCC 43494 / DSM 8903 / Tp8T 6331</strain>
    </source>
</reference>
<evidence type="ECO:0000255" key="1">
    <source>
        <dbReference type="HAMAP-Rule" id="MF_00206"/>
    </source>
</evidence>
<evidence type="ECO:0000255" key="2">
    <source>
        <dbReference type="PROSITE-ProRule" id="PRU01266"/>
    </source>
</evidence>
<protein>
    <recommendedName>
        <fullName evidence="1">Lipoyl synthase</fullName>
        <ecNumber evidence="1">2.8.1.8</ecNumber>
    </recommendedName>
    <alternativeName>
        <fullName evidence="1">Lip-syn</fullName>
        <shortName evidence="1">LS</shortName>
    </alternativeName>
    <alternativeName>
        <fullName evidence="1">Lipoate synthase</fullName>
    </alternativeName>
    <alternativeName>
        <fullName evidence="1">Lipoic acid synthase</fullName>
    </alternativeName>
    <alternativeName>
        <fullName evidence="1">Sulfur insertion protein LipA</fullName>
    </alternativeName>
</protein>
<dbReference type="EC" id="2.8.1.8" evidence="1"/>
<dbReference type="EMBL" id="CP000679">
    <property type="protein sequence ID" value="ABP66487.1"/>
    <property type="molecule type" value="Genomic_DNA"/>
</dbReference>
<dbReference type="RefSeq" id="WP_011916433.1">
    <property type="nucleotide sequence ID" value="NC_009437.1"/>
</dbReference>
<dbReference type="SMR" id="A4XHV2"/>
<dbReference type="STRING" id="351627.Csac_0871"/>
<dbReference type="KEGG" id="csc:Csac_0871"/>
<dbReference type="eggNOG" id="COG0320">
    <property type="taxonomic scope" value="Bacteria"/>
</dbReference>
<dbReference type="HOGENOM" id="CLU_033144_2_1_9"/>
<dbReference type="OrthoDB" id="9787898at2"/>
<dbReference type="UniPathway" id="UPA00538">
    <property type="reaction ID" value="UER00593"/>
</dbReference>
<dbReference type="Proteomes" id="UP000000256">
    <property type="component" value="Chromosome"/>
</dbReference>
<dbReference type="GO" id="GO:0005737">
    <property type="term" value="C:cytoplasm"/>
    <property type="evidence" value="ECO:0007669"/>
    <property type="project" value="UniProtKB-SubCell"/>
</dbReference>
<dbReference type="GO" id="GO:0051539">
    <property type="term" value="F:4 iron, 4 sulfur cluster binding"/>
    <property type="evidence" value="ECO:0007669"/>
    <property type="project" value="UniProtKB-UniRule"/>
</dbReference>
<dbReference type="GO" id="GO:0016992">
    <property type="term" value="F:lipoate synthase activity"/>
    <property type="evidence" value="ECO:0007669"/>
    <property type="project" value="UniProtKB-UniRule"/>
</dbReference>
<dbReference type="GO" id="GO:0046872">
    <property type="term" value="F:metal ion binding"/>
    <property type="evidence" value="ECO:0007669"/>
    <property type="project" value="UniProtKB-KW"/>
</dbReference>
<dbReference type="CDD" id="cd01335">
    <property type="entry name" value="Radical_SAM"/>
    <property type="match status" value="1"/>
</dbReference>
<dbReference type="FunFam" id="3.20.20.70:FF:000040">
    <property type="entry name" value="Lipoyl synthase"/>
    <property type="match status" value="1"/>
</dbReference>
<dbReference type="Gene3D" id="3.20.20.70">
    <property type="entry name" value="Aldolase class I"/>
    <property type="match status" value="1"/>
</dbReference>
<dbReference type="HAMAP" id="MF_00206">
    <property type="entry name" value="Lipoyl_synth"/>
    <property type="match status" value="1"/>
</dbReference>
<dbReference type="InterPro" id="IPR013785">
    <property type="entry name" value="Aldolase_TIM"/>
</dbReference>
<dbReference type="InterPro" id="IPR006638">
    <property type="entry name" value="Elp3/MiaA/NifB-like_rSAM"/>
</dbReference>
<dbReference type="InterPro" id="IPR003698">
    <property type="entry name" value="Lipoyl_synth"/>
</dbReference>
<dbReference type="InterPro" id="IPR007197">
    <property type="entry name" value="rSAM"/>
</dbReference>
<dbReference type="NCBIfam" id="TIGR00510">
    <property type="entry name" value="lipA"/>
    <property type="match status" value="1"/>
</dbReference>
<dbReference type="NCBIfam" id="NF004019">
    <property type="entry name" value="PRK05481.1"/>
    <property type="match status" value="1"/>
</dbReference>
<dbReference type="NCBIfam" id="NF009544">
    <property type="entry name" value="PRK12928.1"/>
    <property type="match status" value="1"/>
</dbReference>
<dbReference type="PANTHER" id="PTHR10949">
    <property type="entry name" value="LIPOYL SYNTHASE"/>
    <property type="match status" value="1"/>
</dbReference>
<dbReference type="PANTHER" id="PTHR10949:SF0">
    <property type="entry name" value="LIPOYL SYNTHASE, MITOCHONDRIAL"/>
    <property type="match status" value="1"/>
</dbReference>
<dbReference type="Pfam" id="PF04055">
    <property type="entry name" value="Radical_SAM"/>
    <property type="match status" value="1"/>
</dbReference>
<dbReference type="PIRSF" id="PIRSF005963">
    <property type="entry name" value="Lipoyl_synth"/>
    <property type="match status" value="1"/>
</dbReference>
<dbReference type="SFLD" id="SFLDF00271">
    <property type="entry name" value="lipoyl_synthase"/>
    <property type="match status" value="1"/>
</dbReference>
<dbReference type="SFLD" id="SFLDG01058">
    <property type="entry name" value="lipoyl_synthase_like"/>
    <property type="match status" value="1"/>
</dbReference>
<dbReference type="SMART" id="SM00729">
    <property type="entry name" value="Elp3"/>
    <property type="match status" value="1"/>
</dbReference>
<dbReference type="SUPFAM" id="SSF102114">
    <property type="entry name" value="Radical SAM enzymes"/>
    <property type="match status" value="1"/>
</dbReference>
<dbReference type="PROSITE" id="PS51918">
    <property type="entry name" value="RADICAL_SAM"/>
    <property type="match status" value="1"/>
</dbReference>